<accession>B8EBJ5</accession>
<dbReference type="EMBL" id="CP001252">
    <property type="protein sequence ID" value="ACK48519.1"/>
    <property type="molecule type" value="Genomic_DNA"/>
</dbReference>
<dbReference type="RefSeq" id="WP_006083590.1">
    <property type="nucleotide sequence ID" value="NC_011663.1"/>
</dbReference>
<dbReference type="SMR" id="B8EBJ5"/>
<dbReference type="GeneID" id="75190608"/>
<dbReference type="KEGG" id="sbp:Sbal223_4046"/>
<dbReference type="HOGENOM" id="CLU_095071_2_1_6"/>
<dbReference type="Proteomes" id="UP000002507">
    <property type="component" value="Chromosome"/>
</dbReference>
<dbReference type="GO" id="GO:0022625">
    <property type="term" value="C:cytosolic large ribosomal subunit"/>
    <property type="evidence" value="ECO:0007669"/>
    <property type="project" value="TreeGrafter"/>
</dbReference>
<dbReference type="GO" id="GO:0070180">
    <property type="term" value="F:large ribosomal subunit rRNA binding"/>
    <property type="evidence" value="ECO:0007669"/>
    <property type="project" value="TreeGrafter"/>
</dbReference>
<dbReference type="GO" id="GO:0003735">
    <property type="term" value="F:structural constituent of ribosome"/>
    <property type="evidence" value="ECO:0007669"/>
    <property type="project" value="InterPro"/>
</dbReference>
<dbReference type="GO" id="GO:0006412">
    <property type="term" value="P:translation"/>
    <property type="evidence" value="ECO:0007669"/>
    <property type="project" value="UniProtKB-UniRule"/>
</dbReference>
<dbReference type="CDD" id="cd00337">
    <property type="entry name" value="Ribosomal_uL14"/>
    <property type="match status" value="1"/>
</dbReference>
<dbReference type="FunFam" id="2.40.150.20:FF:000001">
    <property type="entry name" value="50S ribosomal protein L14"/>
    <property type="match status" value="1"/>
</dbReference>
<dbReference type="Gene3D" id="2.40.150.20">
    <property type="entry name" value="Ribosomal protein L14"/>
    <property type="match status" value="1"/>
</dbReference>
<dbReference type="HAMAP" id="MF_01367">
    <property type="entry name" value="Ribosomal_uL14"/>
    <property type="match status" value="1"/>
</dbReference>
<dbReference type="InterPro" id="IPR000218">
    <property type="entry name" value="Ribosomal_uL14"/>
</dbReference>
<dbReference type="InterPro" id="IPR005745">
    <property type="entry name" value="Ribosomal_uL14_bac-type"/>
</dbReference>
<dbReference type="InterPro" id="IPR019972">
    <property type="entry name" value="Ribosomal_uL14_CS"/>
</dbReference>
<dbReference type="InterPro" id="IPR036853">
    <property type="entry name" value="Ribosomal_uL14_sf"/>
</dbReference>
<dbReference type="NCBIfam" id="TIGR01067">
    <property type="entry name" value="rplN_bact"/>
    <property type="match status" value="1"/>
</dbReference>
<dbReference type="PANTHER" id="PTHR11761">
    <property type="entry name" value="50S/60S RIBOSOMAL PROTEIN L14/L23"/>
    <property type="match status" value="1"/>
</dbReference>
<dbReference type="PANTHER" id="PTHR11761:SF3">
    <property type="entry name" value="LARGE RIBOSOMAL SUBUNIT PROTEIN UL14M"/>
    <property type="match status" value="1"/>
</dbReference>
<dbReference type="Pfam" id="PF00238">
    <property type="entry name" value="Ribosomal_L14"/>
    <property type="match status" value="1"/>
</dbReference>
<dbReference type="SMART" id="SM01374">
    <property type="entry name" value="Ribosomal_L14"/>
    <property type="match status" value="1"/>
</dbReference>
<dbReference type="SUPFAM" id="SSF50193">
    <property type="entry name" value="Ribosomal protein L14"/>
    <property type="match status" value="1"/>
</dbReference>
<dbReference type="PROSITE" id="PS00049">
    <property type="entry name" value="RIBOSOMAL_L14"/>
    <property type="match status" value="1"/>
</dbReference>
<reference key="1">
    <citation type="submission" date="2008-12" db="EMBL/GenBank/DDBJ databases">
        <title>Complete sequence of chromosome of Shewanella baltica OS223.</title>
        <authorList>
            <consortium name="US DOE Joint Genome Institute"/>
            <person name="Lucas S."/>
            <person name="Copeland A."/>
            <person name="Lapidus A."/>
            <person name="Glavina del Rio T."/>
            <person name="Dalin E."/>
            <person name="Tice H."/>
            <person name="Bruce D."/>
            <person name="Goodwin L."/>
            <person name="Pitluck S."/>
            <person name="Chertkov O."/>
            <person name="Meincke L."/>
            <person name="Brettin T."/>
            <person name="Detter J.C."/>
            <person name="Han C."/>
            <person name="Kuske C.R."/>
            <person name="Larimer F."/>
            <person name="Land M."/>
            <person name="Hauser L."/>
            <person name="Kyrpides N."/>
            <person name="Ovchinnikova G."/>
            <person name="Brettar I."/>
            <person name="Rodrigues J."/>
            <person name="Konstantinidis K."/>
            <person name="Tiedje J."/>
        </authorList>
    </citation>
    <scope>NUCLEOTIDE SEQUENCE [LARGE SCALE GENOMIC DNA]</scope>
    <source>
        <strain>OS223</strain>
    </source>
</reference>
<comment type="function">
    <text evidence="1">Binds to 23S rRNA. Forms part of two intersubunit bridges in the 70S ribosome.</text>
</comment>
<comment type="subunit">
    <text evidence="1">Part of the 50S ribosomal subunit. Forms a cluster with proteins L3 and L19. In the 70S ribosome, L14 and L19 interact and together make contacts with the 16S rRNA in bridges B5 and B8.</text>
</comment>
<comment type="similarity">
    <text evidence="1">Belongs to the universal ribosomal protein uL14 family.</text>
</comment>
<sequence length="122" mass="13456">MIQMQSTLDVACNSGARRVQCIKVLGGSHRRYAGIGDIIKVSVKEAIPRAKAKKGDVYNAVVVRTKKGVRRPDGSVIRFDRNAAVLLNNNLQPIGTRIFGPVTRELRNEQFMKIVSLAPEVL</sequence>
<keyword id="KW-0687">Ribonucleoprotein</keyword>
<keyword id="KW-0689">Ribosomal protein</keyword>
<keyword id="KW-0694">RNA-binding</keyword>
<keyword id="KW-0699">rRNA-binding</keyword>
<organism>
    <name type="scientific">Shewanella baltica (strain OS223)</name>
    <dbReference type="NCBI Taxonomy" id="407976"/>
    <lineage>
        <taxon>Bacteria</taxon>
        <taxon>Pseudomonadati</taxon>
        <taxon>Pseudomonadota</taxon>
        <taxon>Gammaproteobacteria</taxon>
        <taxon>Alteromonadales</taxon>
        <taxon>Shewanellaceae</taxon>
        <taxon>Shewanella</taxon>
    </lineage>
</organism>
<evidence type="ECO:0000255" key="1">
    <source>
        <dbReference type="HAMAP-Rule" id="MF_01367"/>
    </source>
</evidence>
<evidence type="ECO:0000305" key="2"/>
<feature type="chain" id="PRO_1000166936" description="Large ribosomal subunit protein uL14">
    <location>
        <begin position="1"/>
        <end position="122"/>
    </location>
</feature>
<gene>
    <name evidence="1" type="primary">rplN</name>
    <name type="ordered locus">Sbal223_4046</name>
</gene>
<name>RL14_SHEB2</name>
<protein>
    <recommendedName>
        <fullName evidence="1">Large ribosomal subunit protein uL14</fullName>
    </recommendedName>
    <alternativeName>
        <fullName evidence="2">50S ribosomal protein L14</fullName>
    </alternativeName>
</protein>
<proteinExistence type="inferred from homology"/>